<comment type="function">
    <text>Seed storage protein.</text>
</comment>
<comment type="subcellular location">
    <subcellularLocation>
        <location>Vacuole</location>
        <location>Aleurone grain</location>
    </subcellularLocation>
    <subcellularLocation>
        <location>Vacuole</location>
    </subcellularLocation>
    <text>Cotyledonary membrane-bound vacuolar protein bodies.</text>
</comment>
<comment type="similarity">
    <text evidence="3">Belongs to the 7S seed storage protein family.</text>
</comment>
<feature type="signal peptide">
    <location>
        <begin position="1"/>
        <end position="27"/>
    </location>
</feature>
<feature type="chain" id="PRO_0000032181" description="Vicilin">
    <location>
        <begin position="28"/>
        <end position="463"/>
    </location>
</feature>
<feature type="domain" description="Cupin type-1 1" evidence="1">
    <location>
        <begin position="35"/>
        <end position="194"/>
    </location>
</feature>
<feature type="domain" description="Cupin type-1 2" evidence="1">
    <location>
        <begin position="254"/>
        <end position="426"/>
    </location>
</feature>
<feature type="region of interest" description="Disordered" evidence="2">
    <location>
        <begin position="235"/>
        <end position="257"/>
    </location>
</feature>
<feature type="compositionally biased region" description="Low complexity" evidence="2">
    <location>
        <begin position="238"/>
        <end position="252"/>
    </location>
</feature>
<feature type="sequence conflict" description="In Ref. 2; CAA68525." evidence="3" ref="2">
    <original>R</original>
    <variation>K</variation>
    <location>
        <position position="257"/>
    </location>
</feature>
<feature type="sequence conflict" description="In Ref. 2; CAA68525." evidence="3" ref="2">
    <original>R</original>
    <variation>Q</variation>
    <location>
        <position position="443"/>
    </location>
</feature>
<accession>P08438</accession>
<name>VCL_VICFA</name>
<dbReference type="EMBL" id="Y00506">
    <property type="protein sequence ID" value="CAA68559.1"/>
    <property type="molecule type" value="Genomic_DNA"/>
</dbReference>
<dbReference type="EMBL" id="Y00462">
    <property type="protein sequence ID" value="CAA68525.1"/>
    <property type="molecule type" value="mRNA"/>
</dbReference>
<dbReference type="PIR" id="A27288">
    <property type="entry name" value="A27288"/>
</dbReference>
<dbReference type="PIR" id="S06309">
    <property type="entry name" value="S06309"/>
</dbReference>
<dbReference type="SMR" id="P08438"/>
<dbReference type="GO" id="GO:0033095">
    <property type="term" value="C:aleurone grain"/>
    <property type="evidence" value="ECO:0007669"/>
    <property type="project" value="UniProtKB-SubCell"/>
</dbReference>
<dbReference type="GO" id="GO:0005773">
    <property type="term" value="C:vacuole"/>
    <property type="evidence" value="ECO:0007669"/>
    <property type="project" value="UniProtKB-SubCell"/>
</dbReference>
<dbReference type="GO" id="GO:0045735">
    <property type="term" value="F:nutrient reservoir activity"/>
    <property type="evidence" value="ECO:0007669"/>
    <property type="project" value="UniProtKB-KW"/>
</dbReference>
<dbReference type="CDD" id="cd02245">
    <property type="entry name" value="cupin_7S_vicilin-like_C"/>
    <property type="match status" value="1"/>
</dbReference>
<dbReference type="CDD" id="cd02244">
    <property type="entry name" value="cupin_7S_vicilin-like_N"/>
    <property type="match status" value="1"/>
</dbReference>
<dbReference type="Gene3D" id="2.60.120.10">
    <property type="entry name" value="Jelly Rolls"/>
    <property type="match status" value="2"/>
</dbReference>
<dbReference type="InterPro" id="IPR006045">
    <property type="entry name" value="Cupin_1"/>
</dbReference>
<dbReference type="InterPro" id="IPR014710">
    <property type="entry name" value="RmlC-like_jellyroll"/>
</dbReference>
<dbReference type="InterPro" id="IPR011051">
    <property type="entry name" value="RmlC_Cupin_sf"/>
</dbReference>
<dbReference type="InterPro" id="IPR050253">
    <property type="entry name" value="Seed_Storage-Functional"/>
</dbReference>
<dbReference type="PANTHER" id="PTHR31189">
    <property type="entry name" value="OS03G0336100 PROTEIN-RELATED"/>
    <property type="match status" value="1"/>
</dbReference>
<dbReference type="PANTHER" id="PTHR31189:SF41">
    <property type="entry name" value="VICILIN C72"/>
    <property type="match status" value="1"/>
</dbReference>
<dbReference type="Pfam" id="PF00190">
    <property type="entry name" value="Cupin_1"/>
    <property type="match status" value="1"/>
</dbReference>
<dbReference type="SMART" id="SM00835">
    <property type="entry name" value="Cupin_1"/>
    <property type="match status" value="2"/>
</dbReference>
<dbReference type="SUPFAM" id="SSF51182">
    <property type="entry name" value="RmlC-like cupins"/>
    <property type="match status" value="2"/>
</dbReference>
<keyword id="KW-0708">Seed storage protein</keyword>
<keyword id="KW-0732">Signal</keyword>
<keyword id="KW-0758">Storage protein</keyword>
<keyword id="KW-0926">Vacuole</keyword>
<organism>
    <name type="scientific">Vicia faba</name>
    <name type="common">Broad bean</name>
    <name type="synonym">Faba vulgaris</name>
    <dbReference type="NCBI Taxonomy" id="3906"/>
    <lineage>
        <taxon>Eukaryota</taxon>
        <taxon>Viridiplantae</taxon>
        <taxon>Streptophyta</taxon>
        <taxon>Embryophyta</taxon>
        <taxon>Tracheophyta</taxon>
        <taxon>Spermatophyta</taxon>
        <taxon>Magnoliopsida</taxon>
        <taxon>eudicotyledons</taxon>
        <taxon>Gunneridae</taxon>
        <taxon>Pentapetalae</taxon>
        <taxon>rosids</taxon>
        <taxon>fabids</taxon>
        <taxon>Fabales</taxon>
        <taxon>Fabaceae</taxon>
        <taxon>Papilionoideae</taxon>
        <taxon>50 kb inversion clade</taxon>
        <taxon>NPAAA clade</taxon>
        <taxon>Hologalegina</taxon>
        <taxon>IRL clade</taxon>
        <taxon>Fabeae</taxon>
        <taxon>Vicia</taxon>
    </lineage>
</organism>
<protein>
    <recommendedName>
        <fullName>Vicilin</fullName>
    </recommendedName>
</protein>
<reference key="1">
    <citation type="journal article" date="1987" name="Nucleic Acids Res.">
        <title>Nucleotide sequence of a field bean (Vicia faba L.var.minor) vicilin gene.</title>
        <authorList>
            <person name="Weschke W."/>
            <person name="Baeumlein H."/>
            <person name="Wobus U."/>
        </authorList>
    </citation>
    <scope>NUCLEOTIDE SEQUENCE [GENOMIC DNA]</scope>
    <source>
        <strain>cv. Minor</strain>
    </source>
</reference>
<reference key="2">
    <citation type="journal article" date="1987" name="Nucleic Acids Res.">
        <title>The primary structure of the predominating vicilin storage protein subunit from field bean seeds (Vicia faba L. var. minor cv. Fribo).</title>
        <authorList>
            <person name="Bassuener R."/>
            <person name="van Nong H."/>
            <person name="Jung R."/>
            <person name="Saalbach G."/>
            <person name="Muentz K."/>
        </authorList>
    </citation>
    <scope>NUCLEOTIDE SEQUENCE [MRNA]</scope>
    <source>
        <strain>cv. Fribo</strain>
    </source>
</reference>
<sequence>MAATTLKDSFPLLTLLGIAFLASVCLSSRSDQDNPFVFESNRFQTLFENENGHIRLLQKFDQHSKLLENLQNYRLLEYKSKPHTIFLPQQTDADFILVVLSGKAILTVLLPNDRNSFSLERGDTIKLPAGTIGYLVNRDDEEDLRVLDLVIPVNRPGEPQSFLLSGNQNQPSILSGFSKNILEASFNTDYKEIEKVLLEEHGKEKYHRRGLKDRRQRGQEENVIVKISRKQIEELNKNAKSSSKKSTSSESEPFNLRSREPIYSNKFGKFFEITPKRNPQLQDLNIFVNYVEINEGSLLLPHYNSRAIVIVTVNEGKGDFELVGQRNENQQGLREEYDEEKEQGEEEIRKQVQNYKAKLSPGDVLVIPAGYPVAIKASSNLNLVGFGINAENNQRYFLAGEEDNVISQIHKPVKELAFPGSAQEVDTLLENQKQSHFANAQPRERERGSQEIKDHLYSILGSF</sequence>
<proteinExistence type="evidence at transcript level"/>
<evidence type="ECO:0000255" key="1"/>
<evidence type="ECO:0000256" key="2">
    <source>
        <dbReference type="SAM" id="MobiDB-lite"/>
    </source>
</evidence>
<evidence type="ECO:0000305" key="3"/>